<organism>
    <name type="scientific">Chlamydia pneumoniae</name>
    <name type="common">Chlamydophila pneumoniae</name>
    <dbReference type="NCBI Taxonomy" id="83558"/>
    <lineage>
        <taxon>Bacteria</taxon>
        <taxon>Pseudomonadati</taxon>
        <taxon>Chlamydiota</taxon>
        <taxon>Chlamydiia</taxon>
        <taxon>Chlamydiales</taxon>
        <taxon>Chlamydiaceae</taxon>
        <taxon>Chlamydia/Chlamydophila group</taxon>
        <taxon>Chlamydia</taxon>
    </lineage>
</organism>
<gene>
    <name type="primary">recO</name>
    <name type="ordered locus">CPn_0589</name>
    <name type="ordered locus">CP_0159</name>
    <name type="ordered locus">CPj0589</name>
    <name type="ordered locus">CpB0613</name>
</gene>
<comment type="function">
    <text evidence="1">Involved in DNA repair and RecF pathway recombination.</text>
</comment>
<comment type="similarity">
    <text evidence="2">Belongs to the RecO family.</text>
</comment>
<proteinExistence type="inferred from homology"/>
<keyword id="KW-0227">DNA damage</keyword>
<keyword id="KW-0233">DNA recombination</keyword>
<keyword id="KW-0234">DNA repair</keyword>
<evidence type="ECO:0000250" key="1"/>
<evidence type="ECO:0000305" key="2"/>
<accession>Q9Z7W5</accession>
<sequence>MQICVTGVVLRSRPLGKNHTLTTLFTPEGLFTFFAKQGQTLQCDYRETLVPISLGKYTLHRNGSRLPKLTHGDILNAFEAIKQTYALLEASGKMIQALLASQWKEKPSHKLFSLFLNFLHRIPESSNPEFFAAIFVLKLLQYEGILDLTPACSLCKASLPYACYRYQGHKLCKKHQHKQAISIEKEEEQILQAIIHAKQFSELLAIAEFPIAIAEKIFYLFDSLQEEKKSERNSSEDPYHEILRLSKVVHPY</sequence>
<feature type="chain" id="PRO_0000204943" description="DNA repair protein RecO">
    <location>
        <begin position="1"/>
        <end position="252"/>
    </location>
</feature>
<name>RECO_CHLPN</name>
<dbReference type="EMBL" id="AE001363">
    <property type="protein sequence ID" value="AAD18728.1"/>
    <property type="molecule type" value="Genomic_DNA"/>
</dbReference>
<dbReference type="EMBL" id="AE002161">
    <property type="protein sequence ID" value="AAF38039.1"/>
    <property type="molecule type" value="Genomic_DNA"/>
</dbReference>
<dbReference type="EMBL" id="BA000008">
    <property type="protein sequence ID" value="BAA98796.1"/>
    <property type="molecule type" value="Genomic_DNA"/>
</dbReference>
<dbReference type="EMBL" id="AE009440">
    <property type="protein sequence ID" value="AAP98542.1"/>
    <property type="molecule type" value="Genomic_DNA"/>
</dbReference>
<dbReference type="PIR" id="B86564">
    <property type="entry name" value="B86564"/>
</dbReference>
<dbReference type="PIR" id="E72060">
    <property type="entry name" value="E72060"/>
</dbReference>
<dbReference type="RefSeq" id="NP_224785.1">
    <property type="nucleotide sequence ID" value="NC_000922.1"/>
</dbReference>
<dbReference type="RefSeq" id="WP_010883227.1">
    <property type="nucleotide sequence ID" value="NZ_LN847257.1"/>
</dbReference>
<dbReference type="SMR" id="Q9Z7W5"/>
<dbReference type="STRING" id="406984.CPK_ORF01106"/>
<dbReference type="GeneID" id="45050635"/>
<dbReference type="KEGG" id="cpa:CP_0159"/>
<dbReference type="KEGG" id="cpj:CPj0589"/>
<dbReference type="KEGG" id="cpn:CPn_0589"/>
<dbReference type="KEGG" id="cpt:CpB0613"/>
<dbReference type="PATRIC" id="fig|115713.3.peg.656"/>
<dbReference type="eggNOG" id="COG1381">
    <property type="taxonomic scope" value="Bacteria"/>
</dbReference>
<dbReference type="HOGENOM" id="CLU_1122990_0_0_0"/>
<dbReference type="OrthoDB" id="17601at2"/>
<dbReference type="Proteomes" id="UP000000583">
    <property type="component" value="Chromosome"/>
</dbReference>
<dbReference type="Proteomes" id="UP000000801">
    <property type="component" value="Chromosome"/>
</dbReference>
<dbReference type="GO" id="GO:0043590">
    <property type="term" value="C:bacterial nucleoid"/>
    <property type="evidence" value="ECO:0007669"/>
    <property type="project" value="TreeGrafter"/>
</dbReference>
<dbReference type="GO" id="GO:0006310">
    <property type="term" value="P:DNA recombination"/>
    <property type="evidence" value="ECO:0007669"/>
    <property type="project" value="UniProtKB-UniRule"/>
</dbReference>
<dbReference type="GO" id="GO:0006302">
    <property type="term" value="P:double-strand break repair"/>
    <property type="evidence" value="ECO:0007669"/>
    <property type="project" value="TreeGrafter"/>
</dbReference>
<dbReference type="Gene3D" id="1.20.1440.120">
    <property type="entry name" value="Recombination protein O, C-terminal domain"/>
    <property type="match status" value="1"/>
</dbReference>
<dbReference type="Gene3D" id="6.20.220.20">
    <property type="entry name" value="Recombination protein O, zinc-binding domain"/>
    <property type="match status" value="1"/>
</dbReference>
<dbReference type="HAMAP" id="MF_00201">
    <property type="entry name" value="RecO"/>
    <property type="match status" value="1"/>
</dbReference>
<dbReference type="InterPro" id="IPR037278">
    <property type="entry name" value="ARFGAP/RecO"/>
</dbReference>
<dbReference type="InterPro" id="IPR022572">
    <property type="entry name" value="DNA_rep/recomb_RecO_N"/>
</dbReference>
<dbReference type="InterPro" id="IPR012340">
    <property type="entry name" value="NA-bd_OB-fold"/>
</dbReference>
<dbReference type="InterPro" id="IPR003717">
    <property type="entry name" value="RecO"/>
</dbReference>
<dbReference type="InterPro" id="IPR042242">
    <property type="entry name" value="RecO_C"/>
</dbReference>
<dbReference type="NCBIfam" id="TIGR00613">
    <property type="entry name" value="reco"/>
    <property type="match status" value="1"/>
</dbReference>
<dbReference type="PANTHER" id="PTHR33991">
    <property type="entry name" value="DNA REPAIR PROTEIN RECO"/>
    <property type="match status" value="1"/>
</dbReference>
<dbReference type="PANTHER" id="PTHR33991:SF1">
    <property type="entry name" value="DNA REPAIR PROTEIN RECO"/>
    <property type="match status" value="1"/>
</dbReference>
<dbReference type="Pfam" id="PF02565">
    <property type="entry name" value="RecO_C"/>
    <property type="match status" value="1"/>
</dbReference>
<dbReference type="Pfam" id="PF11967">
    <property type="entry name" value="RecO_N"/>
    <property type="match status" value="1"/>
</dbReference>
<dbReference type="SUPFAM" id="SSF57863">
    <property type="entry name" value="ArfGap/RecO-like zinc finger"/>
    <property type="match status" value="1"/>
</dbReference>
<dbReference type="SUPFAM" id="SSF50249">
    <property type="entry name" value="Nucleic acid-binding proteins"/>
    <property type="match status" value="1"/>
</dbReference>
<reference key="1">
    <citation type="journal article" date="1999" name="Nat. Genet.">
        <title>Comparative genomes of Chlamydia pneumoniae and C. trachomatis.</title>
        <authorList>
            <person name="Kalman S."/>
            <person name="Mitchell W.P."/>
            <person name="Marathe R."/>
            <person name="Lammel C.J."/>
            <person name="Fan J."/>
            <person name="Hyman R.W."/>
            <person name="Olinger L."/>
            <person name="Grimwood J."/>
            <person name="Davis R.W."/>
            <person name="Stephens R.S."/>
        </authorList>
    </citation>
    <scope>NUCLEOTIDE SEQUENCE [LARGE SCALE GENOMIC DNA]</scope>
    <source>
        <strain>CWL029</strain>
    </source>
</reference>
<reference key="2">
    <citation type="journal article" date="2000" name="Nucleic Acids Res.">
        <title>Genome sequences of Chlamydia trachomatis MoPn and Chlamydia pneumoniae AR39.</title>
        <authorList>
            <person name="Read T.D."/>
            <person name="Brunham R.C."/>
            <person name="Shen C."/>
            <person name="Gill S.R."/>
            <person name="Heidelberg J.F."/>
            <person name="White O."/>
            <person name="Hickey E.K."/>
            <person name="Peterson J.D."/>
            <person name="Utterback T.R."/>
            <person name="Berry K.J."/>
            <person name="Bass S."/>
            <person name="Linher K.D."/>
            <person name="Weidman J.F."/>
            <person name="Khouri H.M."/>
            <person name="Craven B."/>
            <person name="Bowman C."/>
            <person name="Dodson R.J."/>
            <person name="Gwinn M.L."/>
            <person name="Nelson W.C."/>
            <person name="DeBoy R.T."/>
            <person name="Kolonay J.F."/>
            <person name="McClarty G."/>
            <person name="Salzberg S.L."/>
            <person name="Eisen J.A."/>
            <person name="Fraser C.M."/>
        </authorList>
    </citation>
    <scope>NUCLEOTIDE SEQUENCE [LARGE SCALE GENOMIC DNA]</scope>
    <source>
        <strain>AR39</strain>
    </source>
</reference>
<reference key="3">
    <citation type="journal article" date="2000" name="Nucleic Acids Res.">
        <title>Comparison of whole genome sequences of Chlamydia pneumoniae J138 from Japan and CWL029 from USA.</title>
        <authorList>
            <person name="Shirai M."/>
            <person name="Hirakawa H."/>
            <person name="Kimoto M."/>
            <person name="Tabuchi M."/>
            <person name="Kishi F."/>
            <person name="Ouchi K."/>
            <person name="Shiba T."/>
            <person name="Ishii K."/>
            <person name="Hattori M."/>
            <person name="Kuhara S."/>
            <person name="Nakazawa T."/>
        </authorList>
    </citation>
    <scope>NUCLEOTIDE SEQUENCE [LARGE SCALE GENOMIC DNA]</scope>
    <source>
        <strain>J138</strain>
    </source>
</reference>
<reference key="4">
    <citation type="submission" date="2002-05" db="EMBL/GenBank/DDBJ databases">
        <title>The genome sequence of Chlamydia pneumoniae TW183 and comparison with other Chlamydia strains based on whole genome sequence analysis.</title>
        <authorList>
            <person name="Geng M.M."/>
            <person name="Schuhmacher A."/>
            <person name="Muehldorfer I."/>
            <person name="Bensch K.W."/>
            <person name="Schaefer K.P."/>
            <person name="Schneider S."/>
            <person name="Pohl T."/>
            <person name="Essig A."/>
            <person name="Marre R."/>
            <person name="Melchers K."/>
        </authorList>
    </citation>
    <scope>NUCLEOTIDE SEQUENCE [LARGE SCALE GENOMIC DNA]</scope>
    <source>
        <strain>TW-183</strain>
    </source>
</reference>
<protein>
    <recommendedName>
        <fullName>DNA repair protein RecO</fullName>
    </recommendedName>
    <alternativeName>
        <fullName>Recombination protein O</fullName>
    </alternativeName>
</protein>